<reference key="1">
    <citation type="journal article" date="2002" name="Nature">
        <title>Comparison of the genomes of two Xanthomonas pathogens with differing host specificities.</title>
        <authorList>
            <person name="da Silva A.C.R."/>
            <person name="Ferro J.A."/>
            <person name="Reinach F.C."/>
            <person name="Farah C.S."/>
            <person name="Furlan L.R."/>
            <person name="Quaggio R.B."/>
            <person name="Monteiro-Vitorello C.B."/>
            <person name="Van Sluys M.A."/>
            <person name="Almeida N.F. Jr."/>
            <person name="Alves L.M.C."/>
            <person name="do Amaral A.M."/>
            <person name="Bertolini M.C."/>
            <person name="Camargo L.E.A."/>
            <person name="Camarotte G."/>
            <person name="Cannavan F."/>
            <person name="Cardozo J."/>
            <person name="Chambergo F."/>
            <person name="Ciapina L.P."/>
            <person name="Cicarelli R.M.B."/>
            <person name="Coutinho L.L."/>
            <person name="Cursino-Santos J.R."/>
            <person name="El-Dorry H."/>
            <person name="Faria J.B."/>
            <person name="Ferreira A.J.S."/>
            <person name="Ferreira R.C.C."/>
            <person name="Ferro M.I.T."/>
            <person name="Formighieri E.F."/>
            <person name="Franco M.C."/>
            <person name="Greggio C.C."/>
            <person name="Gruber A."/>
            <person name="Katsuyama A.M."/>
            <person name="Kishi L.T."/>
            <person name="Leite R.P."/>
            <person name="Lemos E.G.M."/>
            <person name="Lemos M.V.F."/>
            <person name="Locali E.C."/>
            <person name="Machado M.A."/>
            <person name="Madeira A.M.B.N."/>
            <person name="Martinez-Rossi N.M."/>
            <person name="Martins E.C."/>
            <person name="Meidanis J."/>
            <person name="Menck C.F.M."/>
            <person name="Miyaki C.Y."/>
            <person name="Moon D.H."/>
            <person name="Moreira L.M."/>
            <person name="Novo M.T.M."/>
            <person name="Okura V.K."/>
            <person name="Oliveira M.C."/>
            <person name="Oliveira V.R."/>
            <person name="Pereira H.A."/>
            <person name="Rossi A."/>
            <person name="Sena J.A.D."/>
            <person name="Silva C."/>
            <person name="de Souza R.F."/>
            <person name="Spinola L.A.F."/>
            <person name="Takita M.A."/>
            <person name="Tamura R.E."/>
            <person name="Teixeira E.C."/>
            <person name="Tezza R.I.D."/>
            <person name="Trindade dos Santos M."/>
            <person name="Truffi D."/>
            <person name="Tsai S.M."/>
            <person name="White F.F."/>
            <person name="Setubal J.C."/>
            <person name="Kitajima J.P."/>
        </authorList>
    </citation>
    <scope>NUCLEOTIDE SEQUENCE [LARGE SCALE GENOMIC DNA]</scope>
    <source>
        <strain>306</strain>
    </source>
</reference>
<keyword id="KW-0067">ATP-binding</keyword>
<keyword id="KW-0963">Cytoplasm</keyword>
<keyword id="KW-0547">Nucleotide-binding</keyword>
<keyword id="KW-0548">Nucleotidyltransferase</keyword>
<keyword id="KW-0808">Transferase</keyword>
<keyword id="KW-0819">tRNA processing</keyword>
<accession>Q8PG13</accession>
<gene>
    <name evidence="1" type="primary">tsaC</name>
    <name type="synonym">rimN</name>
    <name type="ordered locus">XAC3808</name>
</gene>
<dbReference type="EC" id="2.7.7.87" evidence="1"/>
<dbReference type="EMBL" id="AE008923">
    <property type="protein sequence ID" value="AAM38650.1"/>
    <property type="molecule type" value="Genomic_DNA"/>
</dbReference>
<dbReference type="RefSeq" id="WP_011052537.1">
    <property type="nucleotide sequence ID" value="NC_003919.1"/>
</dbReference>
<dbReference type="SMR" id="Q8PG13"/>
<dbReference type="KEGG" id="xac:XAC3808"/>
<dbReference type="eggNOG" id="COG0009">
    <property type="taxonomic scope" value="Bacteria"/>
</dbReference>
<dbReference type="HOGENOM" id="CLU_031397_6_0_6"/>
<dbReference type="Proteomes" id="UP000000576">
    <property type="component" value="Chromosome"/>
</dbReference>
<dbReference type="GO" id="GO:0005737">
    <property type="term" value="C:cytoplasm"/>
    <property type="evidence" value="ECO:0007669"/>
    <property type="project" value="UniProtKB-SubCell"/>
</dbReference>
<dbReference type="GO" id="GO:0005524">
    <property type="term" value="F:ATP binding"/>
    <property type="evidence" value="ECO:0007669"/>
    <property type="project" value="UniProtKB-UniRule"/>
</dbReference>
<dbReference type="GO" id="GO:0003725">
    <property type="term" value="F:double-stranded RNA binding"/>
    <property type="evidence" value="ECO:0007669"/>
    <property type="project" value="InterPro"/>
</dbReference>
<dbReference type="GO" id="GO:0061710">
    <property type="term" value="F:L-threonylcarbamoyladenylate synthase"/>
    <property type="evidence" value="ECO:0007669"/>
    <property type="project" value="UniProtKB-EC"/>
</dbReference>
<dbReference type="GO" id="GO:0000049">
    <property type="term" value="F:tRNA binding"/>
    <property type="evidence" value="ECO:0007669"/>
    <property type="project" value="TreeGrafter"/>
</dbReference>
<dbReference type="GO" id="GO:0006450">
    <property type="term" value="P:regulation of translational fidelity"/>
    <property type="evidence" value="ECO:0007669"/>
    <property type="project" value="TreeGrafter"/>
</dbReference>
<dbReference type="GO" id="GO:0002949">
    <property type="term" value="P:tRNA threonylcarbamoyladenosine modification"/>
    <property type="evidence" value="ECO:0007669"/>
    <property type="project" value="UniProtKB-UniRule"/>
</dbReference>
<dbReference type="FunFam" id="3.90.870.10:FF:000004">
    <property type="entry name" value="Threonylcarbamoyl-AMP synthase"/>
    <property type="match status" value="1"/>
</dbReference>
<dbReference type="Gene3D" id="3.90.870.10">
    <property type="entry name" value="DHBP synthase"/>
    <property type="match status" value="1"/>
</dbReference>
<dbReference type="HAMAP" id="MF_01852">
    <property type="entry name" value="TsaC"/>
    <property type="match status" value="1"/>
</dbReference>
<dbReference type="InterPro" id="IPR017945">
    <property type="entry name" value="DHBP_synth_RibB-like_a/b_dom"/>
</dbReference>
<dbReference type="InterPro" id="IPR006070">
    <property type="entry name" value="Sua5-like_dom"/>
</dbReference>
<dbReference type="InterPro" id="IPR023535">
    <property type="entry name" value="TC-AMP_synthase"/>
</dbReference>
<dbReference type="InterPro" id="IPR050156">
    <property type="entry name" value="TC-AMP_synthase_SUA5"/>
</dbReference>
<dbReference type="PANTHER" id="PTHR17490">
    <property type="entry name" value="SUA5"/>
    <property type="match status" value="1"/>
</dbReference>
<dbReference type="PANTHER" id="PTHR17490:SF18">
    <property type="entry name" value="THREONYLCARBAMOYL-AMP SYNTHASE"/>
    <property type="match status" value="1"/>
</dbReference>
<dbReference type="Pfam" id="PF01300">
    <property type="entry name" value="Sua5_yciO_yrdC"/>
    <property type="match status" value="1"/>
</dbReference>
<dbReference type="SUPFAM" id="SSF55821">
    <property type="entry name" value="YrdC/RibB"/>
    <property type="match status" value="1"/>
</dbReference>
<dbReference type="PROSITE" id="PS51163">
    <property type="entry name" value="YRDC"/>
    <property type="match status" value="1"/>
</dbReference>
<feature type="chain" id="PRO_0000353009" description="Threonylcarbamoyl-AMP synthase">
    <location>
        <begin position="1"/>
        <end position="187"/>
    </location>
</feature>
<feature type="domain" description="YrdC-like" evidence="1">
    <location>
        <begin position="4"/>
        <end position="187"/>
    </location>
</feature>
<organism>
    <name type="scientific">Xanthomonas axonopodis pv. citri (strain 306)</name>
    <dbReference type="NCBI Taxonomy" id="190486"/>
    <lineage>
        <taxon>Bacteria</taxon>
        <taxon>Pseudomonadati</taxon>
        <taxon>Pseudomonadota</taxon>
        <taxon>Gammaproteobacteria</taxon>
        <taxon>Lysobacterales</taxon>
        <taxon>Lysobacteraceae</taxon>
        <taxon>Xanthomonas</taxon>
    </lineage>
</organism>
<comment type="function">
    <text evidence="1">Required for the formation of a threonylcarbamoyl group on adenosine at position 37 (t(6)A37) in tRNAs that read codons beginning with adenine. Catalyzes the conversion of L-threonine, HCO(3)(-)/CO(2) and ATP to give threonylcarbamoyl-AMP (TC-AMP) as the acyladenylate intermediate, with the release of diphosphate.</text>
</comment>
<comment type="catalytic activity">
    <reaction evidence="1">
        <text>L-threonine + hydrogencarbonate + ATP = L-threonylcarbamoyladenylate + diphosphate + H2O</text>
        <dbReference type="Rhea" id="RHEA:36407"/>
        <dbReference type="ChEBI" id="CHEBI:15377"/>
        <dbReference type="ChEBI" id="CHEBI:17544"/>
        <dbReference type="ChEBI" id="CHEBI:30616"/>
        <dbReference type="ChEBI" id="CHEBI:33019"/>
        <dbReference type="ChEBI" id="CHEBI:57926"/>
        <dbReference type="ChEBI" id="CHEBI:73682"/>
        <dbReference type="EC" id="2.7.7.87"/>
    </reaction>
</comment>
<comment type="subcellular location">
    <subcellularLocation>
        <location evidence="1">Cytoplasm</location>
    </subcellularLocation>
</comment>
<comment type="similarity">
    <text evidence="1">Belongs to the SUA5 family. TsaC subfamily.</text>
</comment>
<protein>
    <recommendedName>
        <fullName evidence="1">Threonylcarbamoyl-AMP synthase</fullName>
        <shortName evidence="1">TC-AMP synthase</shortName>
        <ecNumber evidence="1">2.7.7.87</ecNumber>
    </recommendedName>
    <alternativeName>
        <fullName evidence="1">L-threonylcarbamoyladenylate synthase</fullName>
    </alternativeName>
    <alternativeName>
        <fullName evidence="1">t(6)A37 threonylcarbamoyladenosine biosynthesis protein TsaC</fullName>
    </alternativeName>
    <alternativeName>
        <fullName evidence="1">tRNA threonylcarbamoyladenosine biosynthesis protein TsaC</fullName>
    </alternativeName>
</protein>
<proteinExistence type="inferred from homology"/>
<evidence type="ECO:0000255" key="1">
    <source>
        <dbReference type="HAMAP-Rule" id="MF_01852"/>
    </source>
</evidence>
<name>TSAC_XANAC</name>
<sequence>MTDTLDLDRAVAALTQGGVIAYPTEAVWGLGCDPRQRAAVMRLLEIKRRPVEKGVIVVASSVDVLRDWVDIDALEPARRRDVLTSWPGPHTWILPITDRAPRWVTGEHDGLAVRISAHPVVAALCGAWGAPLVSTSANLAGEPPARSRAALDPALLATIDGVVDGETGALAQPTQIRDARSGQILRD</sequence>